<gene>
    <name evidence="1" type="primary">rps12</name>
    <name type="ordered locus">Mbar_A3688</name>
</gene>
<comment type="function">
    <text evidence="1">With S4 and S5 plays an important role in translational accuracy. Located at the interface of the 30S and 50S subunits.</text>
</comment>
<comment type="subunit">
    <text evidence="1">Part of the 30S ribosomal subunit.</text>
</comment>
<comment type="similarity">
    <text evidence="1">Belongs to the universal ribosomal protein uS12 family.</text>
</comment>
<proteinExistence type="inferred from homology"/>
<feature type="chain" id="PRO_0000226427" description="Small ribosomal subunit protein uS12">
    <location>
        <begin position="1"/>
        <end position="142"/>
    </location>
</feature>
<sequence>MAKGKYAANILKQTRKNARWKDTSYGRRVLGLNVKADPLGGAPQGRGIVLEKVGVEAKQPNSAIRKCVRIQLIKNGRQVTAFCPGDGAVNFIDEHDEVTVERIGGRMGGAMGDIPGVRFRVTAVNNVSLNQMVIGRLEKPRR</sequence>
<name>RS12_METBF</name>
<accession>Q464Z1</accession>
<protein>
    <recommendedName>
        <fullName evidence="1">Small ribosomal subunit protein uS12</fullName>
    </recommendedName>
    <alternativeName>
        <fullName evidence="2">30S ribosomal protein S12</fullName>
    </alternativeName>
</protein>
<keyword id="KW-0687">Ribonucleoprotein</keyword>
<keyword id="KW-0689">Ribosomal protein</keyword>
<keyword id="KW-0694">RNA-binding</keyword>
<keyword id="KW-0699">rRNA-binding</keyword>
<dbReference type="EMBL" id="CP000099">
    <property type="protein sequence ID" value="AAZ72551.1"/>
    <property type="molecule type" value="Genomic_DNA"/>
</dbReference>
<dbReference type="SMR" id="Q464Z1"/>
<dbReference type="STRING" id="269797.Mbar_A3688"/>
<dbReference type="PaxDb" id="269797-Mbar_A3688"/>
<dbReference type="KEGG" id="mba:Mbar_A3688"/>
<dbReference type="eggNOG" id="arCOG04255">
    <property type="taxonomic scope" value="Archaea"/>
</dbReference>
<dbReference type="HOGENOM" id="CLU_115574_0_1_2"/>
<dbReference type="OrthoDB" id="45154at2157"/>
<dbReference type="GO" id="GO:0015935">
    <property type="term" value="C:small ribosomal subunit"/>
    <property type="evidence" value="ECO:0007669"/>
    <property type="project" value="InterPro"/>
</dbReference>
<dbReference type="GO" id="GO:0019843">
    <property type="term" value="F:rRNA binding"/>
    <property type="evidence" value="ECO:0007669"/>
    <property type="project" value="UniProtKB-UniRule"/>
</dbReference>
<dbReference type="GO" id="GO:0003735">
    <property type="term" value="F:structural constituent of ribosome"/>
    <property type="evidence" value="ECO:0007669"/>
    <property type="project" value="InterPro"/>
</dbReference>
<dbReference type="GO" id="GO:0006412">
    <property type="term" value="P:translation"/>
    <property type="evidence" value="ECO:0007669"/>
    <property type="project" value="UniProtKB-UniRule"/>
</dbReference>
<dbReference type="CDD" id="cd03367">
    <property type="entry name" value="Ribosomal_S23"/>
    <property type="match status" value="1"/>
</dbReference>
<dbReference type="FunFam" id="2.40.50.140:FF:000007">
    <property type="entry name" value="40S ribosomal protein S23"/>
    <property type="match status" value="1"/>
</dbReference>
<dbReference type="Gene3D" id="2.40.50.140">
    <property type="entry name" value="Nucleic acid-binding proteins"/>
    <property type="match status" value="1"/>
</dbReference>
<dbReference type="HAMAP" id="MF_00403_A">
    <property type="entry name" value="Ribosomal_uS12_A"/>
    <property type="match status" value="1"/>
</dbReference>
<dbReference type="InterPro" id="IPR012340">
    <property type="entry name" value="NA-bd_OB-fold"/>
</dbReference>
<dbReference type="InterPro" id="IPR006032">
    <property type="entry name" value="Ribosomal_uS12"/>
</dbReference>
<dbReference type="InterPro" id="IPR022863">
    <property type="entry name" value="Ribosomal_uS12_arc"/>
</dbReference>
<dbReference type="InterPro" id="IPR005680">
    <property type="entry name" value="Ribosomal_uS12_euk/arc"/>
</dbReference>
<dbReference type="NCBIfam" id="NF003254">
    <property type="entry name" value="PRK04211.1"/>
    <property type="match status" value="1"/>
</dbReference>
<dbReference type="NCBIfam" id="TIGR00982">
    <property type="entry name" value="uS12_E_A"/>
    <property type="match status" value="1"/>
</dbReference>
<dbReference type="PANTHER" id="PTHR11652">
    <property type="entry name" value="30S RIBOSOMAL PROTEIN S12 FAMILY MEMBER"/>
    <property type="match status" value="1"/>
</dbReference>
<dbReference type="Pfam" id="PF00164">
    <property type="entry name" value="Ribosom_S12_S23"/>
    <property type="match status" value="1"/>
</dbReference>
<dbReference type="PIRSF" id="PIRSF002133">
    <property type="entry name" value="Ribosomal_S12/S23"/>
    <property type="match status" value="1"/>
</dbReference>
<dbReference type="SUPFAM" id="SSF50249">
    <property type="entry name" value="Nucleic acid-binding proteins"/>
    <property type="match status" value="1"/>
</dbReference>
<dbReference type="PROSITE" id="PS00055">
    <property type="entry name" value="RIBOSOMAL_S12"/>
    <property type="match status" value="1"/>
</dbReference>
<evidence type="ECO:0000255" key="1">
    <source>
        <dbReference type="HAMAP-Rule" id="MF_00403"/>
    </source>
</evidence>
<evidence type="ECO:0000305" key="2"/>
<reference key="1">
    <citation type="journal article" date="2006" name="J. Bacteriol.">
        <title>The Methanosarcina barkeri genome: comparative analysis with Methanosarcina acetivorans and Methanosarcina mazei reveals extensive rearrangement within methanosarcinal genomes.</title>
        <authorList>
            <person name="Maeder D.L."/>
            <person name="Anderson I."/>
            <person name="Brettin T.S."/>
            <person name="Bruce D.C."/>
            <person name="Gilna P."/>
            <person name="Han C.S."/>
            <person name="Lapidus A."/>
            <person name="Metcalf W.W."/>
            <person name="Saunders E."/>
            <person name="Tapia R."/>
            <person name="Sowers K.R."/>
        </authorList>
    </citation>
    <scope>NUCLEOTIDE SEQUENCE [LARGE SCALE GENOMIC DNA]</scope>
    <source>
        <strain>Fusaro / DSM 804</strain>
    </source>
</reference>
<organism>
    <name type="scientific">Methanosarcina barkeri (strain Fusaro / DSM 804)</name>
    <dbReference type="NCBI Taxonomy" id="269797"/>
    <lineage>
        <taxon>Archaea</taxon>
        <taxon>Methanobacteriati</taxon>
        <taxon>Methanobacteriota</taxon>
        <taxon>Stenosarchaea group</taxon>
        <taxon>Methanomicrobia</taxon>
        <taxon>Methanosarcinales</taxon>
        <taxon>Methanosarcinaceae</taxon>
        <taxon>Methanosarcina</taxon>
    </lineage>
</organism>